<feature type="chain" id="PRO_0000257354" description="Ribosomal RNA small subunit methyltransferase A">
    <location>
        <begin position="1"/>
        <end position="296"/>
    </location>
</feature>
<feature type="binding site" evidence="1">
    <location>
        <position position="30"/>
    </location>
    <ligand>
        <name>S-adenosyl-L-methionine</name>
        <dbReference type="ChEBI" id="CHEBI:59789"/>
    </ligand>
</feature>
<feature type="binding site" evidence="1">
    <location>
        <position position="32"/>
    </location>
    <ligand>
        <name>S-adenosyl-L-methionine</name>
        <dbReference type="ChEBI" id="CHEBI:59789"/>
    </ligand>
</feature>
<feature type="binding site" evidence="1">
    <location>
        <position position="57"/>
    </location>
    <ligand>
        <name>S-adenosyl-L-methionine</name>
        <dbReference type="ChEBI" id="CHEBI:59789"/>
    </ligand>
</feature>
<feature type="binding site" evidence="1">
    <location>
        <position position="78"/>
    </location>
    <ligand>
        <name>S-adenosyl-L-methionine</name>
        <dbReference type="ChEBI" id="CHEBI:59789"/>
    </ligand>
</feature>
<feature type="binding site" evidence="1">
    <location>
        <position position="103"/>
    </location>
    <ligand>
        <name>S-adenosyl-L-methionine</name>
        <dbReference type="ChEBI" id="CHEBI:59789"/>
    </ligand>
</feature>
<feature type="binding site" evidence="1">
    <location>
        <position position="128"/>
    </location>
    <ligand>
        <name>S-adenosyl-L-methionine</name>
        <dbReference type="ChEBI" id="CHEBI:59789"/>
    </ligand>
</feature>
<evidence type="ECO:0000255" key="1">
    <source>
        <dbReference type="HAMAP-Rule" id="MF_00607"/>
    </source>
</evidence>
<comment type="function">
    <text evidence="1">Specifically dimethylates two adjacent adenosines (A1518 and A1519) in the loop of a conserved hairpin near the 3'-end of 16S rRNA in the 30S particle. May play a critical role in biogenesis of 30S subunits.</text>
</comment>
<comment type="catalytic activity">
    <reaction evidence="1">
        <text>adenosine(1518)/adenosine(1519) in 16S rRNA + 4 S-adenosyl-L-methionine = N(6)-dimethyladenosine(1518)/N(6)-dimethyladenosine(1519) in 16S rRNA + 4 S-adenosyl-L-homocysteine + 4 H(+)</text>
        <dbReference type="Rhea" id="RHEA:19609"/>
        <dbReference type="Rhea" id="RHEA-COMP:10232"/>
        <dbReference type="Rhea" id="RHEA-COMP:10233"/>
        <dbReference type="ChEBI" id="CHEBI:15378"/>
        <dbReference type="ChEBI" id="CHEBI:57856"/>
        <dbReference type="ChEBI" id="CHEBI:59789"/>
        <dbReference type="ChEBI" id="CHEBI:74411"/>
        <dbReference type="ChEBI" id="CHEBI:74493"/>
        <dbReference type="EC" id="2.1.1.182"/>
    </reaction>
</comment>
<comment type="subcellular location">
    <subcellularLocation>
        <location evidence="1">Cytoplasm</location>
    </subcellularLocation>
</comment>
<comment type="similarity">
    <text evidence="1">Belongs to the class I-like SAM-binding methyltransferase superfamily. rRNA adenine N(6)-methyltransferase family. RsmA subfamily.</text>
</comment>
<sequence length="296" mass="33661">MERKDIATPSRTKALLDQFGFNFKKSLGQNFLVDVNIIHKIIDASEIDDNTGIIEVGPGMGSLTEQLAKRAKKVMSFEIDQRLIPVLKETLAPYDNVTIINEDILKADIGKAVKTYLNDCDKIMVVANLPYYITTPILLNLMQQDIPIDGYVVMMQKEVGERLNAQVGTKAYGSLSIVTQYYTETSKVLTVPKSVFMPPPNVDSIVVKLMQRETPLVSVDDEETFFKLAKAAFAQRRKTINNNYQNFFKDGKKHKESILKWLEQTGIDPKRRGETLSIQDFARLYEEKKNFPELEN</sequence>
<gene>
    <name evidence="1" type="primary">rsmA</name>
    <name evidence="1" type="synonym">ksgA</name>
    <name type="ordered locus">SH2518</name>
</gene>
<protein>
    <recommendedName>
        <fullName evidence="1">Ribosomal RNA small subunit methyltransferase A</fullName>
        <ecNumber evidence="1">2.1.1.182</ecNumber>
    </recommendedName>
    <alternativeName>
        <fullName evidence="1">16S rRNA (adenine(1518)-N(6)/adenine(1519)-N(6))-dimethyltransferase</fullName>
    </alternativeName>
    <alternativeName>
        <fullName evidence="1">16S rRNA dimethyladenosine transferase</fullName>
    </alternativeName>
    <alternativeName>
        <fullName evidence="1">16S rRNA dimethylase</fullName>
    </alternativeName>
    <alternativeName>
        <fullName evidence="1">S-adenosylmethionine-6-N', N'-adenosyl(rRNA) dimethyltransferase</fullName>
    </alternativeName>
</protein>
<keyword id="KW-0963">Cytoplasm</keyword>
<keyword id="KW-0489">Methyltransferase</keyword>
<keyword id="KW-0694">RNA-binding</keyword>
<keyword id="KW-0698">rRNA processing</keyword>
<keyword id="KW-0949">S-adenosyl-L-methionine</keyword>
<keyword id="KW-0808">Transferase</keyword>
<proteinExistence type="inferred from homology"/>
<name>RSMA_STAHJ</name>
<accession>Q4L3F0</accession>
<organism>
    <name type="scientific">Staphylococcus haemolyticus (strain JCSC1435)</name>
    <dbReference type="NCBI Taxonomy" id="279808"/>
    <lineage>
        <taxon>Bacteria</taxon>
        <taxon>Bacillati</taxon>
        <taxon>Bacillota</taxon>
        <taxon>Bacilli</taxon>
        <taxon>Bacillales</taxon>
        <taxon>Staphylococcaceae</taxon>
        <taxon>Staphylococcus</taxon>
    </lineage>
</organism>
<dbReference type="EC" id="2.1.1.182" evidence="1"/>
<dbReference type="EMBL" id="AP006716">
    <property type="protein sequence ID" value="BAE05827.1"/>
    <property type="molecule type" value="Genomic_DNA"/>
</dbReference>
<dbReference type="RefSeq" id="WP_011276768.1">
    <property type="nucleotide sequence ID" value="NC_007168.1"/>
</dbReference>
<dbReference type="SMR" id="Q4L3F0"/>
<dbReference type="GeneID" id="93781747"/>
<dbReference type="KEGG" id="sha:SH2518"/>
<dbReference type="eggNOG" id="COG0030">
    <property type="taxonomic scope" value="Bacteria"/>
</dbReference>
<dbReference type="HOGENOM" id="CLU_041220_0_0_9"/>
<dbReference type="OrthoDB" id="9814755at2"/>
<dbReference type="Proteomes" id="UP000000543">
    <property type="component" value="Chromosome"/>
</dbReference>
<dbReference type="GO" id="GO:0005829">
    <property type="term" value="C:cytosol"/>
    <property type="evidence" value="ECO:0007669"/>
    <property type="project" value="TreeGrafter"/>
</dbReference>
<dbReference type="GO" id="GO:0052908">
    <property type="term" value="F:16S rRNA (adenine(1518)-N(6)/adenine(1519)-N(6))-dimethyltransferase activity"/>
    <property type="evidence" value="ECO:0007669"/>
    <property type="project" value="UniProtKB-EC"/>
</dbReference>
<dbReference type="GO" id="GO:0003723">
    <property type="term" value="F:RNA binding"/>
    <property type="evidence" value="ECO:0007669"/>
    <property type="project" value="UniProtKB-KW"/>
</dbReference>
<dbReference type="CDD" id="cd02440">
    <property type="entry name" value="AdoMet_MTases"/>
    <property type="match status" value="1"/>
</dbReference>
<dbReference type="FunFam" id="1.10.8.100:FF:000002">
    <property type="entry name" value="Ribosomal RNA small subunit methyltransferase A"/>
    <property type="match status" value="1"/>
</dbReference>
<dbReference type="FunFam" id="3.40.50.150:FF:000023">
    <property type="entry name" value="Ribosomal RNA small subunit methyltransferase A"/>
    <property type="match status" value="1"/>
</dbReference>
<dbReference type="Gene3D" id="1.10.8.100">
    <property type="entry name" value="Ribosomal RNA adenine dimethylase-like, domain 2"/>
    <property type="match status" value="1"/>
</dbReference>
<dbReference type="Gene3D" id="3.40.50.150">
    <property type="entry name" value="Vaccinia Virus protein VP39"/>
    <property type="match status" value="1"/>
</dbReference>
<dbReference type="HAMAP" id="MF_00607">
    <property type="entry name" value="16SrRNA_methyltr_A"/>
    <property type="match status" value="1"/>
</dbReference>
<dbReference type="InterPro" id="IPR001737">
    <property type="entry name" value="KsgA/Erm"/>
</dbReference>
<dbReference type="InterPro" id="IPR023165">
    <property type="entry name" value="rRNA_Ade_diMease-like_C"/>
</dbReference>
<dbReference type="InterPro" id="IPR020596">
    <property type="entry name" value="rRNA_Ade_Mease_Trfase_CS"/>
</dbReference>
<dbReference type="InterPro" id="IPR020598">
    <property type="entry name" value="rRNA_Ade_methylase_Trfase_N"/>
</dbReference>
<dbReference type="InterPro" id="IPR011530">
    <property type="entry name" value="rRNA_adenine_dimethylase"/>
</dbReference>
<dbReference type="InterPro" id="IPR029063">
    <property type="entry name" value="SAM-dependent_MTases_sf"/>
</dbReference>
<dbReference type="NCBIfam" id="TIGR00755">
    <property type="entry name" value="ksgA"/>
    <property type="match status" value="1"/>
</dbReference>
<dbReference type="PANTHER" id="PTHR11727">
    <property type="entry name" value="DIMETHYLADENOSINE TRANSFERASE"/>
    <property type="match status" value="1"/>
</dbReference>
<dbReference type="PANTHER" id="PTHR11727:SF7">
    <property type="entry name" value="DIMETHYLADENOSINE TRANSFERASE-RELATED"/>
    <property type="match status" value="1"/>
</dbReference>
<dbReference type="Pfam" id="PF00398">
    <property type="entry name" value="RrnaAD"/>
    <property type="match status" value="1"/>
</dbReference>
<dbReference type="SMART" id="SM00650">
    <property type="entry name" value="rADc"/>
    <property type="match status" value="1"/>
</dbReference>
<dbReference type="SUPFAM" id="SSF53335">
    <property type="entry name" value="S-adenosyl-L-methionine-dependent methyltransferases"/>
    <property type="match status" value="1"/>
</dbReference>
<dbReference type="PROSITE" id="PS01131">
    <property type="entry name" value="RRNA_A_DIMETH"/>
    <property type="match status" value="1"/>
</dbReference>
<dbReference type="PROSITE" id="PS51689">
    <property type="entry name" value="SAM_RNA_A_N6_MT"/>
    <property type="match status" value="1"/>
</dbReference>
<reference key="1">
    <citation type="journal article" date="2005" name="J. Bacteriol.">
        <title>Whole-genome sequencing of Staphylococcus haemolyticus uncovers the extreme plasticity of its genome and the evolution of human-colonizing staphylococcal species.</title>
        <authorList>
            <person name="Takeuchi F."/>
            <person name="Watanabe S."/>
            <person name="Baba T."/>
            <person name="Yuzawa H."/>
            <person name="Ito T."/>
            <person name="Morimoto Y."/>
            <person name="Kuroda M."/>
            <person name="Cui L."/>
            <person name="Takahashi M."/>
            <person name="Ankai A."/>
            <person name="Baba S."/>
            <person name="Fukui S."/>
            <person name="Lee J.C."/>
            <person name="Hiramatsu K."/>
        </authorList>
    </citation>
    <scope>NUCLEOTIDE SEQUENCE [LARGE SCALE GENOMIC DNA]</scope>
    <source>
        <strain>JCSC1435</strain>
    </source>
</reference>